<evidence type="ECO:0000255" key="1">
    <source>
        <dbReference type="HAMAP-Rule" id="MF_01689"/>
    </source>
</evidence>
<sequence>MTKSEKIIELTNHYGAHNYLPLPIVISEAEGVWVKDPEGNKYMDMLSAYSAVNQGHRHPKIIQALKDQADKVTLVSRAFHSDNLGEWYEKICKLAGKDKALPMNTGAEAVETALKAARRWAYDVKGIEPNKAEIIAFNGNFHGRTMAPVSLSSEAEYQRGYGPLLDGFRKVDFGDVDALKAAINENTAAVLVEPIQGEAGINIPPEGYLKAIRELCDEHNVLFIADEIQAGLGRSGKLFATDWDNVKPDVYILGKALGGGVFPISVVLADKEVLDVFTPGSHGSTFGGNPLACAASIAALDVIVDEDLPGRSLELGDYFKEQLKQIDHPSIKEVRGRGLFIGVELNESARPYCEALKEEGLLCKETHDTVIRFAPPLIITKEELDLALEKIRHVFQ</sequence>
<proteinExistence type="inferred from homology"/>
<accession>Q5HHC8</accession>
<name>OAT2_STAAC</name>
<organism>
    <name type="scientific">Staphylococcus aureus (strain COL)</name>
    <dbReference type="NCBI Taxonomy" id="93062"/>
    <lineage>
        <taxon>Bacteria</taxon>
        <taxon>Bacillati</taxon>
        <taxon>Bacillota</taxon>
        <taxon>Bacilli</taxon>
        <taxon>Bacillales</taxon>
        <taxon>Staphylococcaceae</taxon>
        <taxon>Staphylococcus</taxon>
    </lineage>
</organism>
<protein>
    <recommendedName>
        <fullName evidence="1">Ornithine aminotransferase 2</fullName>
        <shortName evidence="1">OAT 2</shortName>
        <ecNumber evidence="1">2.6.1.13</ecNumber>
    </recommendedName>
    <alternativeName>
        <fullName evidence="1">Ornithine--oxo-acid aminotransferase 2</fullName>
    </alternativeName>
</protein>
<keyword id="KW-0028">Amino-acid biosynthesis</keyword>
<keyword id="KW-0032">Aminotransferase</keyword>
<keyword id="KW-0963">Cytoplasm</keyword>
<keyword id="KW-0641">Proline biosynthesis</keyword>
<keyword id="KW-0663">Pyridoxal phosphate</keyword>
<keyword id="KW-0808">Transferase</keyword>
<comment type="function">
    <text evidence="1">Catalyzes the interconversion of ornithine to glutamate semialdehyde.</text>
</comment>
<comment type="catalytic activity">
    <reaction evidence="1">
        <text>a 2-oxocarboxylate + L-ornithine = L-glutamate 5-semialdehyde + an L-alpha-amino acid</text>
        <dbReference type="Rhea" id="RHEA:13877"/>
        <dbReference type="ChEBI" id="CHEBI:35179"/>
        <dbReference type="ChEBI" id="CHEBI:46911"/>
        <dbReference type="ChEBI" id="CHEBI:58066"/>
        <dbReference type="ChEBI" id="CHEBI:59869"/>
        <dbReference type="EC" id="2.6.1.13"/>
    </reaction>
</comment>
<comment type="cofactor">
    <cofactor evidence="1">
        <name>pyridoxal 5'-phosphate</name>
        <dbReference type="ChEBI" id="CHEBI:597326"/>
    </cofactor>
</comment>
<comment type="pathway">
    <text evidence="1">Amino-acid biosynthesis; L-proline biosynthesis; L-glutamate 5-semialdehyde from L-ornithine: step 1/1.</text>
</comment>
<comment type="subcellular location">
    <subcellularLocation>
        <location evidence="1">Cytoplasm</location>
    </subcellularLocation>
</comment>
<comment type="similarity">
    <text evidence="1">Belongs to the class-III pyridoxal-phosphate-dependent aminotransferase family. OAT subfamily.</text>
</comment>
<gene>
    <name evidence="1" type="primary">rocD2</name>
    <name type="ordered locus">SACOL0960</name>
</gene>
<dbReference type="EC" id="2.6.1.13" evidence="1"/>
<dbReference type="EMBL" id="CP000046">
    <property type="protein sequence ID" value="AAW37928.1"/>
    <property type="molecule type" value="Genomic_DNA"/>
</dbReference>
<dbReference type="RefSeq" id="WP_000167314.1">
    <property type="nucleotide sequence ID" value="NZ_JBGOFO010000002.1"/>
</dbReference>
<dbReference type="SMR" id="Q5HHC8"/>
<dbReference type="KEGG" id="sac:SACOL0960"/>
<dbReference type="HOGENOM" id="CLU_016922_10_1_9"/>
<dbReference type="UniPathway" id="UPA00098">
    <property type="reaction ID" value="UER00358"/>
</dbReference>
<dbReference type="Proteomes" id="UP000000530">
    <property type="component" value="Chromosome"/>
</dbReference>
<dbReference type="GO" id="GO:0005737">
    <property type="term" value="C:cytoplasm"/>
    <property type="evidence" value="ECO:0007669"/>
    <property type="project" value="UniProtKB-SubCell"/>
</dbReference>
<dbReference type="GO" id="GO:0042802">
    <property type="term" value="F:identical protein binding"/>
    <property type="evidence" value="ECO:0007669"/>
    <property type="project" value="TreeGrafter"/>
</dbReference>
<dbReference type="GO" id="GO:0004587">
    <property type="term" value="F:ornithine aminotransferase activity"/>
    <property type="evidence" value="ECO:0007669"/>
    <property type="project" value="UniProtKB-UniRule"/>
</dbReference>
<dbReference type="GO" id="GO:0030170">
    <property type="term" value="F:pyridoxal phosphate binding"/>
    <property type="evidence" value="ECO:0007669"/>
    <property type="project" value="UniProtKB-UniRule"/>
</dbReference>
<dbReference type="GO" id="GO:0055129">
    <property type="term" value="P:L-proline biosynthetic process"/>
    <property type="evidence" value="ECO:0007669"/>
    <property type="project" value="UniProtKB-UniRule"/>
</dbReference>
<dbReference type="CDD" id="cd00610">
    <property type="entry name" value="OAT_like"/>
    <property type="match status" value="1"/>
</dbReference>
<dbReference type="FunFam" id="3.40.640.10:FF:000011">
    <property type="entry name" value="Ornithine aminotransferase"/>
    <property type="match status" value="1"/>
</dbReference>
<dbReference type="Gene3D" id="3.90.1150.10">
    <property type="entry name" value="Aspartate Aminotransferase, domain 1"/>
    <property type="match status" value="1"/>
</dbReference>
<dbReference type="Gene3D" id="3.40.640.10">
    <property type="entry name" value="Type I PLP-dependent aspartate aminotransferase-like (Major domain)"/>
    <property type="match status" value="1"/>
</dbReference>
<dbReference type="HAMAP" id="MF_01689">
    <property type="entry name" value="Ornith_aminotrans_3"/>
    <property type="match status" value="1"/>
</dbReference>
<dbReference type="InterPro" id="IPR005814">
    <property type="entry name" value="Aminotrans_3"/>
</dbReference>
<dbReference type="InterPro" id="IPR049704">
    <property type="entry name" value="Aminotrans_3_PPA_site"/>
</dbReference>
<dbReference type="InterPro" id="IPR050103">
    <property type="entry name" value="Class-III_PLP-dep_AT"/>
</dbReference>
<dbReference type="InterPro" id="IPR010164">
    <property type="entry name" value="Orn_aminotrans"/>
</dbReference>
<dbReference type="InterPro" id="IPR034757">
    <property type="entry name" value="Ornith_aminotrans_bact"/>
</dbReference>
<dbReference type="InterPro" id="IPR015424">
    <property type="entry name" value="PyrdxlP-dep_Trfase"/>
</dbReference>
<dbReference type="InterPro" id="IPR015421">
    <property type="entry name" value="PyrdxlP-dep_Trfase_major"/>
</dbReference>
<dbReference type="InterPro" id="IPR015422">
    <property type="entry name" value="PyrdxlP-dep_Trfase_small"/>
</dbReference>
<dbReference type="NCBIfam" id="TIGR01885">
    <property type="entry name" value="Orn_aminotrans"/>
    <property type="match status" value="1"/>
</dbReference>
<dbReference type="NCBIfam" id="NF002325">
    <property type="entry name" value="PRK01278.1"/>
    <property type="match status" value="1"/>
</dbReference>
<dbReference type="NCBIfam" id="NF003145">
    <property type="entry name" value="PRK04073.1"/>
    <property type="match status" value="1"/>
</dbReference>
<dbReference type="PANTHER" id="PTHR11986">
    <property type="entry name" value="AMINOTRANSFERASE CLASS III"/>
    <property type="match status" value="1"/>
</dbReference>
<dbReference type="PANTHER" id="PTHR11986:SF18">
    <property type="entry name" value="ORNITHINE AMINOTRANSFERASE, MITOCHONDRIAL"/>
    <property type="match status" value="1"/>
</dbReference>
<dbReference type="Pfam" id="PF00202">
    <property type="entry name" value="Aminotran_3"/>
    <property type="match status" value="1"/>
</dbReference>
<dbReference type="PIRSF" id="PIRSF000521">
    <property type="entry name" value="Transaminase_4ab_Lys_Orn"/>
    <property type="match status" value="1"/>
</dbReference>
<dbReference type="SUPFAM" id="SSF53383">
    <property type="entry name" value="PLP-dependent transferases"/>
    <property type="match status" value="1"/>
</dbReference>
<dbReference type="PROSITE" id="PS00600">
    <property type="entry name" value="AA_TRANSFER_CLASS_3"/>
    <property type="match status" value="1"/>
</dbReference>
<feature type="chain" id="PRO_0000112781" description="Ornithine aminotransferase 2">
    <location>
        <begin position="1"/>
        <end position="396"/>
    </location>
</feature>
<feature type="modified residue" description="N6-(pyridoxal phosphate)lysine" evidence="1">
    <location>
        <position position="255"/>
    </location>
</feature>
<reference key="1">
    <citation type="journal article" date="2005" name="J. Bacteriol.">
        <title>Insights on evolution of virulence and resistance from the complete genome analysis of an early methicillin-resistant Staphylococcus aureus strain and a biofilm-producing methicillin-resistant Staphylococcus epidermidis strain.</title>
        <authorList>
            <person name="Gill S.R."/>
            <person name="Fouts D.E."/>
            <person name="Archer G.L."/>
            <person name="Mongodin E.F."/>
            <person name="DeBoy R.T."/>
            <person name="Ravel J."/>
            <person name="Paulsen I.T."/>
            <person name="Kolonay J.F."/>
            <person name="Brinkac L.M."/>
            <person name="Beanan M.J."/>
            <person name="Dodson R.J."/>
            <person name="Daugherty S.C."/>
            <person name="Madupu R."/>
            <person name="Angiuoli S.V."/>
            <person name="Durkin A.S."/>
            <person name="Haft D.H."/>
            <person name="Vamathevan J.J."/>
            <person name="Khouri H."/>
            <person name="Utterback T.R."/>
            <person name="Lee C."/>
            <person name="Dimitrov G."/>
            <person name="Jiang L."/>
            <person name="Qin H."/>
            <person name="Weidman J."/>
            <person name="Tran K."/>
            <person name="Kang K.H."/>
            <person name="Hance I.R."/>
            <person name="Nelson K.E."/>
            <person name="Fraser C.M."/>
        </authorList>
    </citation>
    <scope>NUCLEOTIDE SEQUENCE [LARGE SCALE GENOMIC DNA]</scope>
    <source>
        <strain>COL</strain>
    </source>
</reference>